<dbReference type="EC" id="2.5.1.145" evidence="1"/>
<dbReference type="EMBL" id="CP000570">
    <property type="protein sequence ID" value="ABN82258.1"/>
    <property type="molecule type" value="Genomic_DNA"/>
</dbReference>
<dbReference type="RefSeq" id="WP_011851226.1">
    <property type="nucleotide sequence ID" value="NC_009074.1"/>
</dbReference>
<dbReference type="SMR" id="A3N6V2"/>
<dbReference type="KEGG" id="bpd:BURPS668_1023"/>
<dbReference type="HOGENOM" id="CLU_013386_1_0_4"/>
<dbReference type="UniPathway" id="UPA00664"/>
<dbReference type="GO" id="GO:0005886">
    <property type="term" value="C:plasma membrane"/>
    <property type="evidence" value="ECO:0007669"/>
    <property type="project" value="UniProtKB-SubCell"/>
</dbReference>
<dbReference type="GO" id="GO:0008961">
    <property type="term" value="F:phosphatidylglycerol-prolipoprotein diacylglyceryl transferase activity"/>
    <property type="evidence" value="ECO:0007669"/>
    <property type="project" value="UniProtKB-UniRule"/>
</dbReference>
<dbReference type="GO" id="GO:0042158">
    <property type="term" value="P:lipoprotein biosynthetic process"/>
    <property type="evidence" value="ECO:0007669"/>
    <property type="project" value="UniProtKB-UniRule"/>
</dbReference>
<dbReference type="HAMAP" id="MF_01147">
    <property type="entry name" value="Lgt"/>
    <property type="match status" value="1"/>
</dbReference>
<dbReference type="InterPro" id="IPR001640">
    <property type="entry name" value="Lgt"/>
</dbReference>
<dbReference type="NCBIfam" id="TIGR00544">
    <property type="entry name" value="lgt"/>
    <property type="match status" value="1"/>
</dbReference>
<dbReference type="PANTHER" id="PTHR30589:SF0">
    <property type="entry name" value="PHOSPHATIDYLGLYCEROL--PROLIPOPROTEIN DIACYLGLYCERYL TRANSFERASE"/>
    <property type="match status" value="1"/>
</dbReference>
<dbReference type="PANTHER" id="PTHR30589">
    <property type="entry name" value="PROLIPOPROTEIN DIACYLGLYCERYL TRANSFERASE"/>
    <property type="match status" value="1"/>
</dbReference>
<dbReference type="Pfam" id="PF01790">
    <property type="entry name" value="LGT"/>
    <property type="match status" value="1"/>
</dbReference>
<dbReference type="PROSITE" id="PS01311">
    <property type="entry name" value="LGT"/>
    <property type="match status" value="1"/>
</dbReference>
<comment type="function">
    <text evidence="1">Catalyzes the transfer of the diacylglyceryl group from phosphatidylglycerol to the sulfhydryl group of the N-terminal cysteine of a prolipoprotein, the first step in the formation of mature lipoproteins.</text>
</comment>
<comment type="catalytic activity">
    <reaction evidence="1">
        <text>L-cysteinyl-[prolipoprotein] + a 1,2-diacyl-sn-glycero-3-phospho-(1'-sn-glycerol) = an S-1,2-diacyl-sn-glyceryl-L-cysteinyl-[prolipoprotein] + sn-glycerol 1-phosphate + H(+)</text>
        <dbReference type="Rhea" id="RHEA:56712"/>
        <dbReference type="Rhea" id="RHEA-COMP:14679"/>
        <dbReference type="Rhea" id="RHEA-COMP:14680"/>
        <dbReference type="ChEBI" id="CHEBI:15378"/>
        <dbReference type="ChEBI" id="CHEBI:29950"/>
        <dbReference type="ChEBI" id="CHEBI:57685"/>
        <dbReference type="ChEBI" id="CHEBI:64716"/>
        <dbReference type="ChEBI" id="CHEBI:140658"/>
        <dbReference type="EC" id="2.5.1.145"/>
    </reaction>
</comment>
<comment type="pathway">
    <text evidence="1">Protein modification; lipoprotein biosynthesis (diacylglyceryl transfer).</text>
</comment>
<comment type="subcellular location">
    <subcellularLocation>
        <location evidence="1">Cell inner membrane</location>
        <topology evidence="1">Multi-pass membrane protein</topology>
    </subcellularLocation>
</comment>
<comment type="similarity">
    <text evidence="1">Belongs to the Lgt family.</text>
</comment>
<sequence>MIIHPNFDPVAIHLGPLAVRWYGLMYLVGFIFAIVVGRLRLKLPHVAAQGWSAKDIDDMMFYGVLGVVLGGRLGYVLFYKAGYYFSHPLDIFRVWEGGMSFHGGFLGVTLAMALFAWQRKRHWLEVTDFVAPMVPTGLAAGRLGNFINGELWGRVTSPDAPWAMLFPGASRDDAAWLAAHQDIAAKWNLNEVFLSHQMLPRHPSQLYEIALEGIALFFVLWFFSRKPRPMGAISALFLIGYGAARFTVEFAREPDDFLGLLTFGLSMGQWLSLPMIVAGVLMMIWAYRRGGVAKQA</sequence>
<name>LGT_BURP6</name>
<protein>
    <recommendedName>
        <fullName evidence="1">Phosphatidylglycerol--prolipoprotein diacylglyceryl transferase</fullName>
        <ecNumber evidence="1">2.5.1.145</ecNumber>
    </recommendedName>
</protein>
<feature type="chain" id="PRO_1000053404" description="Phosphatidylglycerol--prolipoprotein diacylglyceryl transferase">
    <location>
        <begin position="1"/>
        <end position="296"/>
    </location>
</feature>
<feature type="transmembrane region" description="Helical" evidence="1">
    <location>
        <begin position="17"/>
        <end position="37"/>
    </location>
</feature>
<feature type="transmembrane region" description="Helical" evidence="1">
    <location>
        <begin position="59"/>
        <end position="79"/>
    </location>
</feature>
<feature type="transmembrane region" description="Helical" evidence="1">
    <location>
        <begin position="97"/>
        <end position="117"/>
    </location>
</feature>
<feature type="transmembrane region" description="Helical" evidence="1">
    <location>
        <begin position="230"/>
        <end position="250"/>
    </location>
</feature>
<feature type="transmembrane region" description="Helical" evidence="1">
    <location>
        <begin position="265"/>
        <end position="285"/>
    </location>
</feature>
<feature type="binding site" evidence="1">
    <location>
        <position position="142"/>
    </location>
    <ligand>
        <name>a 1,2-diacyl-sn-glycero-3-phospho-(1'-sn-glycerol)</name>
        <dbReference type="ChEBI" id="CHEBI:64716"/>
    </ligand>
</feature>
<gene>
    <name evidence="1" type="primary">lgt</name>
    <name type="ordered locus">BURPS668_1023</name>
</gene>
<accession>A3N6V2</accession>
<proteinExistence type="inferred from homology"/>
<evidence type="ECO:0000255" key="1">
    <source>
        <dbReference type="HAMAP-Rule" id="MF_01147"/>
    </source>
</evidence>
<organism>
    <name type="scientific">Burkholderia pseudomallei (strain 668)</name>
    <dbReference type="NCBI Taxonomy" id="320373"/>
    <lineage>
        <taxon>Bacteria</taxon>
        <taxon>Pseudomonadati</taxon>
        <taxon>Pseudomonadota</taxon>
        <taxon>Betaproteobacteria</taxon>
        <taxon>Burkholderiales</taxon>
        <taxon>Burkholderiaceae</taxon>
        <taxon>Burkholderia</taxon>
        <taxon>pseudomallei group</taxon>
    </lineage>
</organism>
<reference key="1">
    <citation type="journal article" date="2010" name="Genome Biol. Evol.">
        <title>Continuing evolution of Burkholderia mallei through genome reduction and large-scale rearrangements.</title>
        <authorList>
            <person name="Losada L."/>
            <person name="Ronning C.M."/>
            <person name="DeShazer D."/>
            <person name="Woods D."/>
            <person name="Fedorova N."/>
            <person name="Kim H.S."/>
            <person name="Shabalina S.A."/>
            <person name="Pearson T.R."/>
            <person name="Brinkac L."/>
            <person name="Tan P."/>
            <person name="Nandi T."/>
            <person name="Crabtree J."/>
            <person name="Badger J."/>
            <person name="Beckstrom-Sternberg S."/>
            <person name="Saqib M."/>
            <person name="Schutzer S.E."/>
            <person name="Keim P."/>
            <person name="Nierman W.C."/>
        </authorList>
    </citation>
    <scope>NUCLEOTIDE SEQUENCE [LARGE SCALE GENOMIC DNA]</scope>
    <source>
        <strain>668</strain>
    </source>
</reference>
<keyword id="KW-0997">Cell inner membrane</keyword>
<keyword id="KW-1003">Cell membrane</keyword>
<keyword id="KW-0472">Membrane</keyword>
<keyword id="KW-0808">Transferase</keyword>
<keyword id="KW-0812">Transmembrane</keyword>
<keyword id="KW-1133">Transmembrane helix</keyword>